<organism>
    <name type="scientific">Drosophila melanogaster</name>
    <name type="common">Fruit fly</name>
    <dbReference type="NCBI Taxonomy" id="7227"/>
    <lineage>
        <taxon>Eukaryota</taxon>
        <taxon>Metazoa</taxon>
        <taxon>Ecdysozoa</taxon>
        <taxon>Arthropoda</taxon>
        <taxon>Hexapoda</taxon>
        <taxon>Insecta</taxon>
        <taxon>Pterygota</taxon>
        <taxon>Neoptera</taxon>
        <taxon>Endopterygota</taxon>
        <taxon>Diptera</taxon>
        <taxon>Brachycera</taxon>
        <taxon>Muscomorpha</taxon>
        <taxon>Ephydroidea</taxon>
        <taxon>Drosophilidae</taxon>
        <taxon>Drosophila</taxon>
        <taxon>Sophophora</taxon>
    </lineage>
</organism>
<proteinExistence type="evidence at transcript level"/>
<accession>Q9VZE7</accession>
<accession>Q86P33</accession>
<gene>
    <name evidence="5" type="primary">Ctl1</name>
    <name evidence="5" type="ORF">CG1311</name>
</gene>
<sequence>MGCAESKDGEGEAQNNRPKYRSCTDTCWLAIYIIFWLFLIVIAIFSFVYGNPLRIINGYDSFGNTCGVKYNEKFQGFPLSGMNTLDKPELFYFDVKELKKSLKICVKSCPAKTMTKGSELLEYYSQTGTQLCKYDYNMQQLTTAGNDAKTFNFLGPCPSFPVHESSPVLHRCVPKGTGEKVQNYYDMLNNWDVAQQFVGDIYSTWHIIAMVCGLALLISIALVTMMHWLSRIVSWIICVLVIVASVALTVALWYAYYNIRNKSGVNTQYSMLEEFVRNQQAVLTLAVLATITMIILIVVIYFLKNKLAGLSALFEEAGQCMMNLPGLLIAPLLAFLVLIAFLSFWVAVIICLATASSPGQSPIAPFDNSKAHQQPLPANALFVSNSTDVNDLRPNARVEYADAGVLRSMFWIYVVGLIWTVEFIFACQQFALAAAVAFWYFQKPTSTPTFYAIGKLVKYHLGTVAKGSFVITIFKIPRLILTYLYAKLKKGEDKGSECAACCLKCCICGFWLLEKFIRFLNHNAYTVVAIESINFCPAAGIAWNAMATNVLQVATINSVGDFILFLGKVVVAALSGLIGIVLLKDKPGLNFYMAPVIIIIIFSFFIAHIILSLFEMVVDTLFLCVCEDKTLNGRSGRWAQSNLAKLVGEEPLQPGEEPPIEVVQMMPINKQPFSITRLPQSDPEVAPMSAD</sequence>
<keyword id="KW-0325">Glycoprotein</keyword>
<keyword id="KW-0472">Membrane</keyword>
<keyword id="KW-1185">Reference proteome</keyword>
<keyword id="KW-0812">Transmembrane</keyword>
<keyword id="KW-1133">Transmembrane helix</keyword>
<comment type="subcellular location">
    <subcellularLocation>
        <location evidence="1">Membrane</location>
        <topology evidence="1">Multi-pass membrane protein</topology>
    </subcellularLocation>
</comment>
<comment type="similarity">
    <text evidence="4">Belongs to the CTL (choline transporter-like) family.</text>
</comment>
<dbReference type="EMBL" id="AE014296">
    <property type="protein sequence ID" value="AAF47876.1"/>
    <property type="molecule type" value="Genomic_DNA"/>
</dbReference>
<dbReference type="EMBL" id="BT003504">
    <property type="protein sequence ID" value="AAO39508.1"/>
    <property type="molecule type" value="mRNA"/>
</dbReference>
<dbReference type="RefSeq" id="NP_647884.1">
    <property type="nucleotide sequence ID" value="NM_139627.2"/>
</dbReference>
<dbReference type="FunCoup" id="Q9VZE7">
    <property type="interactions" value="161"/>
</dbReference>
<dbReference type="STRING" id="7227.FBpp0073088"/>
<dbReference type="GlyCosmos" id="Q9VZE7">
    <property type="glycosylation" value="2 sites, No reported glycans"/>
</dbReference>
<dbReference type="GlyGen" id="Q9VZE7">
    <property type="glycosylation" value="2 sites"/>
</dbReference>
<dbReference type="SwissPalm" id="Q9VZE7"/>
<dbReference type="PaxDb" id="7227-FBpp0073088"/>
<dbReference type="EnsemblMetazoa" id="FBtr0073232">
    <property type="protein sequence ID" value="FBpp0073088"/>
    <property type="gene ID" value="FBgn0035523"/>
</dbReference>
<dbReference type="GeneID" id="38523"/>
<dbReference type="KEGG" id="dme:Dmel_CG1311"/>
<dbReference type="UCSC" id="CG1311-RA">
    <property type="organism name" value="d. melanogaster"/>
</dbReference>
<dbReference type="AGR" id="FB:FBgn0035523"/>
<dbReference type="CTD" id="110280"/>
<dbReference type="FlyBase" id="FBgn0035523">
    <property type="gene designation" value="Ctl1"/>
</dbReference>
<dbReference type="VEuPathDB" id="VectorBase:FBgn0035523"/>
<dbReference type="eggNOG" id="KOG1362">
    <property type="taxonomic scope" value="Eukaryota"/>
</dbReference>
<dbReference type="HOGENOM" id="CLU_017181_2_0_1"/>
<dbReference type="InParanoid" id="Q9VZE7"/>
<dbReference type="OMA" id="LLGIRYM"/>
<dbReference type="OrthoDB" id="420519at2759"/>
<dbReference type="PhylomeDB" id="Q9VZE7"/>
<dbReference type="Reactome" id="R-DME-1483191">
    <property type="pathway name" value="Synthesis of PC"/>
</dbReference>
<dbReference type="Reactome" id="R-DME-425366">
    <property type="pathway name" value="Transport of bile salts and organic acids, metal ions and amine compounds"/>
</dbReference>
<dbReference type="Reactome" id="R-DME-6798163">
    <property type="pathway name" value="Choline catabolism"/>
</dbReference>
<dbReference type="BioGRID-ORCS" id="38523">
    <property type="hits" value="0 hits in 3 CRISPR screens"/>
</dbReference>
<dbReference type="ChiTaRS" id="CG1311">
    <property type="organism name" value="fly"/>
</dbReference>
<dbReference type="GenomeRNAi" id="38523"/>
<dbReference type="PRO" id="PR:Q9VZE7"/>
<dbReference type="Proteomes" id="UP000000803">
    <property type="component" value="Chromosome 3L"/>
</dbReference>
<dbReference type="Bgee" id="FBgn0035523">
    <property type="expression patterns" value="Expressed in leg taste bristle chemosensory neuron in post-embryonic organism and 134 other cell types or tissues"/>
</dbReference>
<dbReference type="ExpressionAtlas" id="Q9VZE7">
    <property type="expression patterns" value="baseline and differential"/>
</dbReference>
<dbReference type="GO" id="GO:0016020">
    <property type="term" value="C:membrane"/>
    <property type="evidence" value="ECO:0000318"/>
    <property type="project" value="GO_Central"/>
</dbReference>
<dbReference type="GO" id="GO:0022857">
    <property type="term" value="F:transmembrane transporter activity"/>
    <property type="evidence" value="ECO:0000318"/>
    <property type="project" value="GO_Central"/>
</dbReference>
<dbReference type="GO" id="GO:0055085">
    <property type="term" value="P:transmembrane transport"/>
    <property type="evidence" value="ECO:0000318"/>
    <property type="project" value="GO_Central"/>
</dbReference>
<dbReference type="InterPro" id="IPR007603">
    <property type="entry name" value="Choline_transptr-like"/>
</dbReference>
<dbReference type="PANTHER" id="PTHR12385">
    <property type="entry name" value="CHOLINE TRANSPORTER-LIKE (SLC FAMILY 44)"/>
    <property type="match status" value="1"/>
</dbReference>
<dbReference type="PANTHER" id="PTHR12385:SF12">
    <property type="entry name" value="CHOLINE TRANSPORTER-LIKE PROTEIN"/>
    <property type="match status" value="1"/>
</dbReference>
<dbReference type="Pfam" id="PF04515">
    <property type="entry name" value="Choline_transpo"/>
    <property type="match status" value="1"/>
</dbReference>
<reference key="1">
    <citation type="journal article" date="2000" name="Science">
        <title>The genome sequence of Drosophila melanogaster.</title>
        <authorList>
            <person name="Adams M.D."/>
            <person name="Celniker S.E."/>
            <person name="Holt R.A."/>
            <person name="Evans C.A."/>
            <person name="Gocayne J.D."/>
            <person name="Amanatides P.G."/>
            <person name="Scherer S.E."/>
            <person name="Li P.W."/>
            <person name="Hoskins R.A."/>
            <person name="Galle R.F."/>
            <person name="George R.A."/>
            <person name="Lewis S.E."/>
            <person name="Richards S."/>
            <person name="Ashburner M."/>
            <person name="Henderson S.N."/>
            <person name="Sutton G.G."/>
            <person name="Wortman J.R."/>
            <person name="Yandell M.D."/>
            <person name="Zhang Q."/>
            <person name="Chen L.X."/>
            <person name="Brandon R.C."/>
            <person name="Rogers Y.-H.C."/>
            <person name="Blazej R.G."/>
            <person name="Champe M."/>
            <person name="Pfeiffer B.D."/>
            <person name="Wan K.H."/>
            <person name="Doyle C."/>
            <person name="Baxter E.G."/>
            <person name="Helt G."/>
            <person name="Nelson C.R."/>
            <person name="Miklos G.L.G."/>
            <person name="Abril J.F."/>
            <person name="Agbayani A."/>
            <person name="An H.-J."/>
            <person name="Andrews-Pfannkoch C."/>
            <person name="Baldwin D."/>
            <person name="Ballew R.M."/>
            <person name="Basu A."/>
            <person name="Baxendale J."/>
            <person name="Bayraktaroglu L."/>
            <person name="Beasley E.M."/>
            <person name="Beeson K.Y."/>
            <person name="Benos P.V."/>
            <person name="Berman B.P."/>
            <person name="Bhandari D."/>
            <person name="Bolshakov S."/>
            <person name="Borkova D."/>
            <person name="Botchan M.R."/>
            <person name="Bouck J."/>
            <person name="Brokstein P."/>
            <person name="Brottier P."/>
            <person name="Burtis K.C."/>
            <person name="Busam D.A."/>
            <person name="Butler H."/>
            <person name="Cadieu E."/>
            <person name="Center A."/>
            <person name="Chandra I."/>
            <person name="Cherry J.M."/>
            <person name="Cawley S."/>
            <person name="Dahlke C."/>
            <person name="Davenport L.B."/>
            <person name="Davies P."/>
            <person name="de Pablos B."/>
            <person name="Delcher A."/>
            <person name="Deng Z."/>
            <person name="Mays A.D."/>
            <person name="Dew I."/>
            <person name="Dietz S.M."/>
            <person name="Dodson K."/>
            <person name="Doup L.E."/>
            <person name="Downes M."/>
            <person name="Dugan-Rocha S."/>
            <person name="Dunkov B.C."/>
            <person name="Dunn P."/>
            <person name="Durbin K.J."/>
            <person name="Evangelista C.C."/>
            <person name="Ferraz C."/>
            <person name="Ferriera S."/>
            <person name="Fleischmann W."/>
            <person name="Fosler C."/>
            <person name="Gabrielian A.E."/>
            <person name="Garg N.S."/>
            <person name="Gelbart W.M."/>
            <person name="Glasser K."/>
            <person name="Glodek A."/>
            <person name="Gong F."/>
            <person name="Gorrell J.H."/>
            <person name="Gu Z."/>
            <person name="Guan P."/>
            <person name="Harris M."/>
            <person name="Harris N.L."/>
            <person name="Harvey D.A."/>
            <person name="Heiman T.J."/>
            <person name="Hernandez J.R."/>
            <person name="Houck J."/>
            <person name="Hostin D."/>
            <person name="Houston K.A."/>
            <person name="Howland T.J."/>
            <person name="Wei M.-H."/>
            <person name="Ibegwam C."/>
            <person name="Jalali M."/>
            <person name="Kalush F."/>
            <person name="Karpen G.H."/>
            <person name="Ke Z."/>
            <person name="Kennison J.A."/>
            <person name="Ketchum K.A."/>
            <person name="Kimmel B.E."/>
            <person name="Kodira C.D."/>
            <person name="Kraft C.L."/>
            <person name="Kravitz S."/>
            <person name="Kulp D."/>
            <person name="Lai Z."/>
            <person name="Lasko P."/>
            <person name="Lei Y."/>
            <person name="Levitsky A.A."/>
            <person name="Li J.H."/>
            <person name="Li Z."/>
            <person name="Liang Y."/>
            <person name="Lin X."/>
            <person name="Liu X."/>
            <person name="Mattei B."/>
            <person name="McIntosh T.C."/>
            <person name="McLeod M.P."/>
            <person name="McPherson D."/>
            <person name="Merkulov G."/>
            <person name="Milshina N.V."/>
            <person name="Mobarry C."/>
            <person name="Morris J."/>
            <person name="Moshrefi A."/>
            <person name="Mount S.M."/>
            <person name="Moy M."/>
            <person name="Murphy B."/>
            <person name="Murphy L."/>
            <person name="Muzny D.M."/>
            <person name="Nelson D.L."/>
            <person name="Nelson D.R."/>
            <person name="Nelson K.A."/>
            <person name="Nixon K."/>
            <person name="Nusskern D.R."/>
            <person name="Pacleb J.M."/>
            <person name="Palazzolo M."/>
            <person name="Pittman G.S."/>
            <person name="Pan S."/>
            <person name="Pollard J."/>
            <person name="Puri V."/>
            <person name="Reese M.G."/>
            <person name="Reinert K."/>
            <person name="Remington K."/>
            <person name="Saunders R.D.C."/>
            <person name="Scheeler F."/>
            <person name="Shen H."/>
            <person name="Shue B.C."/>
            <person name="Siden-Kiamos I."/>
            <person name="Simpson M."/>
            <person name="Skupski M.P."/>
            <person name="Smith T.J."/>
            <person name="Spier E."/>
            <person name="Spradling A.C."/>
            <person name="Stapleton M."/>
            <person name="Strong R."/>
            <person name="Sun E."/>
            <person name="Svirskas R."/>
            <person name="Tector C."/>
            <person name="Turner R."/>
            <person name="Venter E."/>
            <person name="Wang A.H."/>
            <person name="Wang X."/>
            <person name="Wang Z.-Y."/>
            <person name="Wassarman D.A."/>
            <person name="Weinstock G.M."/>
            <person name="Weissenbach J."/>
            <person name="Williams S.M."/>
            <person name="Woodage T."/>
            <person name="Worley K.C."/>
            <person name="Wu D."/>
            <person name="Yang S."/>
            <person name="Yao Q.A."/>
            <person name="Ye J."/>
            <person name="Yeh R.-F."/>
            <person name="Zaveri J.S."/>
            <person name="Zhan M."/>
            <person name="Zhang G."/>
            <person name="Zhao Q."/>
            <person name="Zheng L."/>
            <person name="Zheng X.H."/>
            <person name="Zhong F.N."/>
            <person name="Zhong W."/>
            <person name="Zhou X."/>
            <person name="Zhu S.C."/>
            <person name="Zhu X."/>
            <person name="Smith H.O."/>
            <person name="Gibbs R.A."/>
            <person name="Myers E.W."/>
            <person name="Rubin G.M."/>
            <person name="Venter J.C."/>
        </authorList>
    </citation>
    <scope>NUCLEOTIDE SEQUENCE [LARGE SCALE GENOMIC DNA]</scope>
    <source>
        <strain>Berkeley</strain>
    </source>
</reference>
<reference key="2">
    <citation type="journal article" date="2002" name="Genome Biol.">
        <title>Annotation of the Drosophila melanogaster euchromatic genome: a systematic review.</title>
        <authorList>
            <person name="Misra S."/>
            <person name="Crosby M.A."/>
            <person name="Mungall C.J."/>
            <person name="Matthews B.B."/>
            <person name="Campbell K.S."/>
            <person name="Hradecky P."/>
            <person name="Huang Y."/>
            <person name="Kaminker J.S."/>
            <person name="Millburn G.H."/>
            <person name="Prochnik S.E."/>
            <person name="Smith C.D."/>
            <person name="Tupy J.L."/>
            <person name="Whitfield E.J."/>
            <person name="Bayraktaroglu L."/>
            <person name="Berman B.P."/>
            <person name="Bettencourt B.R."/>
            <person name="Celniker S.E."/>
            <person name="de Grey A.D.N.J."/>
            <person name="Drysdale R.A."/>
            <person name="Harris N.L."/>
            <person name="Richter J."/>
            <person name="Russo S."/>
            <person name="Schroeder A.J."/>
            <person name="Shu S.Q."/>
            <person name="Stapleton M."/>
            <person name="Yamada C."/>
            <person name="Ashburner M."/>
            <person name="Gelbart W.M."/>
            <person name="Rubin G.M."/>
            <person name="Lewis S.E."/>
        </authorList>
    </citation>
    <scope>GENOME REANNOTATION</scope>
    <source>
        <strain>Berkeley</strain>
    </source>
</reference>
<reference key="3">
    <citation type="submission" date="2003-02" db="EMBL/GenBank/DDBJ databases">
        <authorList>
            <person name="Stapleton M."/>
            <person name="Brokstein P."/>
            <person name="Hong L."/>
            <person name="Agbayani A."/>
            <person name="Carlson J.W."/>
            <person name="Champe M."/>
            <person name="Chavez C."/>
            <person name="Dorsett V."/>
            <person name="Dresnek D."/>
            <person name="Farfan D."/>
            <person name="Frise E."/>
            <person name="George R.A."/>
            <person name="Gonzalez M."/>
            <person name="Guarin H."/>
            <person name="Kronmiller B."/>
            <person name="Li P.W."/>
            <person name="Liao G."/>
            <person name="Miranda A."/>
            <person name="Mungall C.J."/>
            <person name="Nunoo J."/>
            <person name="Pacleb J.M."/>
            <person name="Paragas V."/>
            <person name="Park S."/>
            <person name="Patel S."/>
            <person name="Phouanenavong S."/>
            <person name="Wan K.H."/>
            <person name="Yu C."/>
            <person name="Lewis S.E."/>
            <person name="Rubin G.M."/>
            <person name="Celniker S.E."/>
        </authorList>
    </citation>
    <scope>NUCLEOTIDE SEQUENCE [LARGE SCALE MRNA]</scope>
    <source>
        <strain>Berkeley</strain>
        <tissue>Embryo</tissue>
    </source>
</reference>
<name>CTL1L_DROME</name>
<feature type="chain" id="PRO_0000359732" description="Choline transporter-like 1">
    <location>
        <begin position="1"/>
        <end position="691"/>
    </location>
</feature>
<feature type="transmembrane region" description="Helical" evidence="2">
    <location>
        <begin position="28"/>
        <end position="48"/>
    </location>
</feature>
<feature type="transmembrane region" description="Helical" evidence="2">
    <location>
        <begin position="205"/>
        <end position="225"/>
    </location>
</feature>
<feature type="transmembrane region" description="Helical" evidence="2">
    <location>
        <begin position="232"/>
        <end position="252"/>
    </location>
</feature>
<feature type="transmembrane region" description="Helical" evidence="2">
    <location>
        <begin position="282"/>
        <end position="302"/>
    </location>
</feature>
<feature type="transmembrane region" description="Helical" evidence="2">
    <location>
        <begin position="332"/>
        <end position="352"/>
    </location>
</feature>
<feature type="transmembrane region" description="Helical" evidence="2">
    <location>
        <begin position="408"/>
        <end position="428"/>
    </location>
</feature>
<feature type="transmembrane region" description="Helical" evidence="2">
    <location>
        <begin position="527"/>
        <end position="547"/>
    </location>
</feature>
<feature type="transmembrane region" description="Helical" evidence="2">
    <location>
        <begin position="562"/>
        <end position="582"/>
    </location>
</feature>
<feature type="transmembrane region" description="Helical" evidence="2">
    <location>
        <begin position="591"/>
        <end position="611"/>
    </location>
</feature>
<feature type="region of interest" description="Disordered" evidence="3">
    <location>
        <begin position="1"/>
        <end position="20"/>
    </location>
</feature>
<feature type="compositionally biased region" description="Basic and acidic residues" evidence="3">
    <location>
        <begin position="1"/>
        <end position="10"/>
    </location>
</feature>
<feature type="glycosylation site" description="N-linked (GlcNAc...) asparagine" evidence="2">
    <location>
        <position position="261"/>
    </location>
</feature>
<feature type="glycosylation site" description="N-linked (GlcNAc...) asparagine" evidence="2">
    <location>
        <position position="385"/>
    </location>
</feature>
<feature type="sequence conflict" description="In Ref. 3; AAO39508." evidence="4" ref="3">
    <original>P</original>
    <variation>H</variation>
    <location>
        <position position="18"/>
    </location>
</feature>
<feature type="sequence conflict" description="In Ref. 3; AAO39508." evidence="4" ref="3">
    <original>E</original>
    <variation>G</variation>
    <location>
        <position position="661"/>
    </location>
</feature>
<evidence type="ECO:0000250" key="1"/>
<evidence type="ECO:0000255" key="2"/>
<evidence type="ECO:0000256" key="3">
    <source>
        <dbReference type="SAM" id="MobiDB-lite"/>
    </source>
</evidence>
<evidence type="ECO:0000305" key="4"/>
<evidence type="ECO:0000312" key="5">
    <source>
        <dbReference type="FlyBase" id="FBgn0035523"/>
    </source>
</evidence>
<protein>
    <recommendedName>
        <fullName evidence="5">Choline transporter-like 1</fullName>
    </recommendedName>
</protein>